<protein>
    <recommendedName>
        <fullName evidence="5">Desmoplakin-A</fullName>
    </recommendedName>
    <alternativeName>
        <fullName evidence="8">Desmoplakin isoform X2</fullName>
    </alternativeName>
</protein>
<dbReference type="EMBL" id="BC090682">
    <property type="protein sequence ID" value="AAH90682.1"/>
    <property type="molecule type" value="mRNA"/>
</dbReference>
<dbReference type="EMBL" id="CU929426">
    <property type="status" value="NOT_ANNOTATED_CDS"/>
    <property type="molecule type" value="Genomic_DNA"/>
</dbReference>
<dbReference type="EMBL" id="FP102778">
    <property type="status" value="NOT_ANNOTATED_CDS"/>
    <property type="molecule type" value="Genomic_DNA"/>
</dbReference>
<dbReference type="EMBL" id="FP243387">
    <property type="status" value="NOT_ANNOTATED_CDS"/>
    <property type="molecule type" value="Genomic_DNA"/>
</dbReference>
<dbReference type="RefSeq" id="NP_001410685.1">
    <property type="nucleotide sequence ID" value="NM_001423756.1"/>
</dbReference>
<dbReference type="RefSeq" id="XP_005171161.1">
    <property type="nucleotide sequence ID" value="XM_005171104.3"/>
</dbReference>
<dbReference type="SMR" id="A0A8M2BID5"/>
<dbReference type="FunCoup" id="A0A8M2BID5">
    <property type="interactions" value="967"/>
</dbReference>
<dbReference type="STRING" id="7955.ENSDARP00000123859"/>
<dbReference type="Ensembl" id="ENSDART00000148460">
    <property type="protein sequence ID" value="ENSDARP00000123859"/>
    <property type="gene ID" value="ENSDARG00000022309"/>
</dbReference>
<dbReference type="GeneID" id="324023"/>
<dbReference type="AGR" id="ZFIN:ZDB-GENE-030131-2743"/>
<dbReference type="ZFIN" id="ZDB-GENE-030131-2743">
    <property type="gene designation" value="dspa"/>
</dbReference>
<dbReference type="HOGENOM" id="CLU_001780_0_0_1"/>
<dbReference type="OMA" id="KYGDGMQ"/>
<dbReference type="OrthoDB" id="8938928at2759"/>
<dbReference type="Reactome" id="R-DRE-351906">
    <property type="pathway name" value="Apoptotic cleavage of cell adhesion proteins"/>
</dbReference>
<dbReference type="Reactome" id="R-DRE-6798695">
    <property type="pathway name" value="Neutrophil degranulation"/>
</dbReference>
<dbReference type="Reactome" id="R-DRE-6805567">
    <property type="pathway name" value="Keratinization"/>
</dbReference>
<dbReference type="Reactome" id="R-DRE-6809371">
    <property type="pathway name" value="Formation of the cornified envelope"/>
</dbReference>
<dbReference type="Reactome" id="R-DRE-9696264">
    <property type="pathway name" value="RND3 GTPase cycle"/>
</dbReference>
<dbReference type="Reactome" id="R-DRE-9696273">
    <property type="pathway name" value="RND1 GTPase cycle"/>
</dbReference>
<dbReference type="PRO" id="PR:A0A8M2BID5"/>
<dbReference type="Proteomes" id="UP000000437">
    <property type="component" value="Chromosome 2"/>
</dbReference>
<dbReference type="Bgee" id="ENSDARG00000022309">
    <property type="expression patterns" value="Expressed in zone of skin and 45 other cell types or tissues"/>
</dbReference>
<dbReference type="GO" id="GO:0005856">
    <property type="term" value="C:cytoskeleton"/>
    <property type="evidence" value="ECO:0007669"/>
    <property type="project" value="InterPro"/>
</dbReference>
<dbReference type="GO" id="GO:0030057">
    <property type="term" value="C:desmosome"/>
    <property type="evidence" value="ECO:0007669"/>
    <property type="project" value="UniProtKB-SubCell"/>
</dbReference>
<dbReference type="GO" id="GO:0014704">
    <property type="term" value="C:intercalated disc"/>
    <property type="evidence" value="ECO:0000318"/>
    <property type="project" value="GO_Central"/>
</dbReference>
<dbReference type="GO" id="GO:0005886">
    <property type="term" value="C:plasma membrane"/>
    <property type="evidence" value="ECO:0000318"/>
    <property type="project" value="GO_Central"/>
</dbReference>
<dbReference type="GO" id="GO:0005198">
    <property type="term" value="F:structural molecule activity"/>
    <property type="evidence" value="ECO:0000318"/>
    <property type="project" value="GO_Central"/>
</dbReference>
<dbReference type="GO" id="GO:0098609">
    <property type="term" value="P:cell-cell adhesion"/>
    <property type="evidence" value="ECO:0000318"/>
    <property type="project" value="GO_Central"/>
</dbReference>
<dbReference type="GO" id="GO:0002934">
    <property type="term" value="P:desmosome organization"/>
    <property type="evidence" value="ECO:0000315"/>
    <property type="project" value="UniProtKB"/>
</dbReference>
<dbReference type="GO" id="GO:0061436">
    <property type="term" value="P:establishment of skin barrier"/>
    <property type="evidence" value="ECO:0000315"/>
    <property type="project" value="UniProtKB"/>
</dbReference>
<dbReference type="GO" id="GO:0031101">
    <property type="term" value="P:fin regeneration"/>
    <property type="evidence" value="ECO:0000316"/>
    <property type="project" value="ZFIN"/>
</dbReference>
<dbReference type="GO" id="GO:0060047">
    <property type="term" value="P:heart contraction"/>
    <property type="evidence" value="ECO:0000316"/>
    <property type="project" value="ZFIN"/>
</dbReference>
<dbReference type="GO" id="GO:0007507">
    <property type="term" value="P:heart development"/>
    <property type="evidence" value="ECO:0000315"/>
    <property type="project" value="UniProtKB"/>
</dbReference>
<dbReference type="GO" id="GO:0045104">
    <property type="term" value="P:intermediate filament cytoskeleton organization"/>
    <property type="evidence" value="ECO:0000318"/>
    <property type="project" value="GO_Central"/>
</dbReference>
<dbReference type="GO" id="GO:0043588">
    <property type="term" value="P:skin development"/>
    <property type="evidence" value="ECO:0000318"/>
    <property type="project" value="GO_Central"/>
</dbReference>
<dbReference type="GO" id="GO:0042060">
    <property type="term" value="P:wound healing"/>
    <property type="evidence" value="ECO:0000318"/>
    <property type="project" value="GO_Central"/>
</dbReference>
<dbReference type="CDD" id="cd00176">
    <property type="entry name" value="SPEC"/>
    <property type="match status" value="2"/>
</dbReference>
<dbReference type="FunFam" id="1.20.58.60:FF:000123">
    <property type="entry name" value="Desmoplakin a"/>
    <property type="match status" value="1"/>
</dbReference>
<dbReference type="FunFam" id="1.20.58.60:FF:000430">
    <property type="entry name" value="Desmoplakin a"/>
    <property type="match status" value="1"/>
</dbReference>
<dbReference type="FunFam" id="3.30.160.780:FF:000001">
    <property type="entry name" value="Plectin a"/>
    <property type="match status" value="1"/>
</dbReference>
<dbReference type="FunFam" id="3.90.1290.10:FF:000001">
    <property type="entry name" value="Plectin a"/>
    <property type="match status" value="1"/>
</dbReference>
<dbReference type="FunFam" id="3.90.1290.10:FF:000002">
    <property type="entry name" value="Plectin a"/>
    <property type="match status" value="1"/>
</dbReference>
<dbReference type="FunFam" id="1.20.58.60:FF:000010">
    <property type="entry name" value="plectin isoform X2"/>
    <property type="match status" value="1"/>
</dbReference>
<dbReference type="Gene3D" id="1.20.58.1060">
    <property type="match status" value="1"/>
</dbReference>
<dbReference type="Gene3D" id="1.20.58.60">
    <property type="match status" value="3"/>
</dbReference>
<dbReference type="Gene3D" id="3.30.160.780">
    <property type="match status" value="1"/>
</dbReference>
<dbReference type="Gene3D" id="3.90.1290.10">
    <property type="entry name" value="Plakin repeat"/>
    <property type="match status" value="2"/>
</dbReference>
<dbReference type="Gene3D" id="2.30.30.40">
    <property type="entry name" value="SH3 Domains"/>
    <property type="match status" value="1"/>
</dbReference>
<dbReference type="InterPro" id="IPR041615">
    <property type="entry name" value="Desmoplakin_SH3"/>
</dbReference>
<dbReference type="InterPro" id="IPR041573">
    <property type="entry name" value="Desmoplakin_Spectrin-like"/>
</dbReference>
<dbReference type="InterPro" id="IPR043197">
    <property type="entry name" value="Plakin"/>
</dbReference>
<dbReference type="InterPro" id="IPR035915">
    <property type="entry name" value="Plakin_repeat_sf"/>
</dbReference>
<dbReference type="InterPro" id="IPR001101">
    <property type="entry name" value="Plectin_repeat"/>
</dbReference>
<dbReference type="InterPro" id="IPR018159">
    <property type="entry name" value="Spectrin/alpha-actinin"/>
</dbReference>
<dbReference type="PANTHER" id="PTHR23169:SF26">
    <property type="entry name" value="DESMOPLAKIN"/>
    <property type="match status" value="1"/>
</dbReference>
<dbReference type="PANTHER" id="PTHR23169">
    <property type="entry name" value="ENVOPLAKIN"/>
    <property type="match status" value="1"/>
</dbReference>
<dbReference type="Pfam" id="PF00681">
    <property type="entry name" value="Plectin"/>
    <property type="match status" value="5"/>
</dbReference>
<dbReference type="Pfam" id="PF17902">
    <property type="entry name" value="SH3_10"/>
    <property type="match status" value="1"/>
</dbReference>
<dbReference type="Pfam" id="PF18373">
    <property type="entry name" value="Spectrin_2"/>
    <property type="match status" value="1"/>
</dbReference>
<dbReference type="Pfam" id="PF21019">
    <property type="entry name" value="Spectrin_3"/>
    <property type="match status" value="1"/>
</dbReference>
<dbReference type="Pfam" id="PF21097">
    <property type="entry name" value="SR_plectin_7"/>
    <property type="match status" value="1"/>
</dbReference>
<dbReference type="SMART" id="SM00250">
    <property type="entry name" value="PLEC"/>
    <property type="match status" value="12"/>
</dbReference>
<dbReference type="SMART" id="SM00150">
    <property type="entry name" value="SPEC"/>
    <property type="match status" value="4"/>
</dbReference>
<dbReference type="SUPFAM" id="SSF75399">
    <property type="entry name" value="Plakin repeat"/>
    <property type="match status" value="3"/>
</dbReference>
<dbReference type="SUPFAM" id="SSF46966">
    <property type="entry name" value="Spectrin repeat"/>
    <property type="match status" value="4"/>
</dbReference>
<dbReference type="PROSITE" id="PS00144">
    <property type="entry name" value="ASN_GLN_ASE_1"/>
    <property type="match status" value="1"/>
</dbReference>
<name>DESPA_DANRE</name>
<keyword id="KW-0965">Cell junction</keyword>
<keyword id="KW-1003">Cell membrane</keyword>
<keyword id="KW-0175">Coiled coil</keyword>
<keyword id="KW-0472">Membrane</keyword>
<keyword id="KW-0597">Phosphoprotein</keyword>
<keyword id="KW-1185">Reference proteome</keyword>
<keyword id="KW-0677">Repeat</keyword>
<accession>A0A8M2BID5</accession>
<accession>F8W4Q1</accession>
<accession>Q5CZW1</accession>
<evidence type="ECO:0000250" key="1">
    <source>
        <dbReference type="UniProtKB" id="E9Q557"/>
    </source>
</evidence>
<evidence type="ECO:0000255" key="2"/>
<evidence type="ECO:0000256" key="3">
    <source>
        <dbReference type="SAM" id="MobiDB-lite"/>
    </source>
</evidence>
<evidence type="ECO:0000269" key="4">
    <source>
    </source>
</evidence>
<evidence type="ECO:0000305" key="5"/>
<evidence type="ECO:0000312" key="6">
    <source>
        <dbReference type="EMBL" id="AAH90682.1"/>
    </source>
</evidence>
<evidence type="ECO:0000312" key="7">
    <source>
        <dbReference type="Proteomes" id="UP000000437"/>
    </source>
</evidence>
<evidence type="ECO:0000312" key="8">
    <source>
        <dbReference type="RefSeq" id="XP_005171161.1"/>
    </source>
</evidence>
<evidence type="ECO:0000312" key="9">
    <source>
        <dbReference type="ZFIN" id="ZDB-GENE-030131-2743"/>
    </source>
</evidence>
<feature type="chain" id="PRO_0000456965" description="Desmoplakin-A">
    <location>
        <begin position="1"/>
        <end position="2059"/>
    </location>
</feature>
<feature type="repeat" description="Plectin 1" evidence="2">
    <location>
        <begin position="1450"/>
        <end position="1488"/>
    </location>
</feature>
<feature type="repeat" description="Plectin 2" evidence="2">
    <location>
        <begin position="1489"/>
        <end position="1526"/>
    </location>
</feature>
<feature type="repeat" description="Plectin 3" evidence="2">
    <location>
        <begin position="1564"/>
        <end position="1602"/>
    </location>
</feature>
<feature type="repeat" description="Plectin 4" evidence="2">
    <location>
        <begin position="1666"/>
        <end position="1694"/>
    </location>
</feature>
<feature type="repeat" description="Plectin 5" evidence="2">
    <location>
        <begin position="1847"/>
        <end position="1885"/>
    </location>
</feature>
<feature type="repeat" description="Plectin 6" evidence="2">
    <location>
        <begin position="1923"/>
        <end position="1961"/>
    </location>
</feature>
<feature type="region of interest" description="Disordered" evidence="3">
    <location>
        <begin position="1"/>
        <end position="25"/>
    </location>
</feature>
<feature type="region of interest" description="Disordered" evidence="3">
    <location>
        <begin position="665"/>
        <end position="690"/>
    </location>
</feature>
<feature type="region of interest" description="Disordered" evidence="3">
    <location>
        <begin position="2008"/>
        <end position="2059"/>
    </location>
</feature>
<feature type="coiled-coil region" evidence="2">
    <location>
        <begin position="320"/>
        <end position="354"/>
    </location>
</feature>
<feature type="coiled-coil region" evidence="2">
    <location>
        <begin position="397"/>
        <end position="453"/>
    </location>
</feature>
<feature type="coiled-coil region" evidence="2">
    <location>
        <begin position="1062"/>
        <end position="1229"/>
    </location>
</feature>
<feature type="coiled-coil region" evidence="2">
    <location>
        <begin position="1261"/>
        <end position="1383"/>
    </location>
</feature>
<feature type="compositionally biased region" description="Polar residues" evidence="3">
    <location>
        <begin position="1"/>
        <end position="11"/>
    </location>
</feature>
<feature type="compositionally biased region" description="Low complexity" evidence="3">
    <location>
        <begin position="671"/>
        <end position="690"/>
    </location>
</feature>
<feature type="compositionally biased region" description="Low complexity" evidence="3">
    <location>
        <begin position="2011"/>
        <end position="2059"/>
    </location>
</feature>
<comment type="function">
    <text evidence="4">Involved in the organization of desmosome cell-cell junctions (PubMed:29522173). Of particular importance in cell adhesion in the skin and during cardiac development (PubMed:29522173). May also play a role in the regulation of Wnt, TGF-beta and Hippo signaling pathways (PubMed:29522173).</text>
</comment>
<comment type="subcellular location">
    <subcellularLocation>
        <location evidence="1">Cell junction</location>
        <location evidence="1">Desmosome</location>
    </subcellularLocation>
    <subcellularLocation>
        <location evidence="1">Cell membrane</location>
    </subcellularLocation>
</comment>
<comment type="developmental stage">
    <text evidence="4">Expressed in the periderm and enveloping layer between 6 hours post-fertilization (hpf) to 16 hpf. Expressed in the epidermis, otic vesicle, gut, neural tube, pharynx, pectoral fin, and olfactory organ from 1 to 5 dpf. Expressed in the lens and cardiac region at 6 hpf to 5 dpf.</text>
</comment>
<comment type="disruption phenotype">
    <text evidence="4">Morpholino knockdowns show no general morphological differences however do show a slight developmental delay (PubMed:29522173). Abnormal skin surface, reduced numbers of desmosome cell-cell junctions and disorganization of remaining desmosome at 2 dpf (PubMed:29522173). Cardiac regions show reduced desmosome numbers, detached cells and pericardial effusion. Reduced resting heart rate (PubMed:29522173). A cardiac reduction in Wnt and TGF-beta signaling is also evident, with an increase in Hippo signaling (PubMed:29522173).</text>
</comment>
<comment type="similarity">
    <text evidence="5">Belongs to the plakin or cytolinker family.</text>
</comment>
<sequence>MSLSGSQTRLHQISRRSSSRPDLTAVGYSLPRNDGAQFFTSGNGYQSDYNDGYMQTYTQTFSKNSQGGGAGGAQSMSSMAVQKRAQMLYSDCMGFLQRAQGLLETMGPASEVDKNMMAAQDAMDQLRKCAVDMRNAGLPNDMILRSLEDCHSFYADIRNSITGTTIRRTGGTVSGTIGGTISGTIGGTVGGWDDPSKSFQDALSWINQKKRLIETSGFGENSEAISQQILNHNKFHSSIQRSQEVDRARDDLMQSREKAGLHALDQEWDSLQKMSHARMDHLRDLQSIIEEISRAIMWVNDREEEELVFDWGDKNIDNYIPQKQESYSKLMSDLEEKEKELNKLKAKVDMLLKNQHPASDKIEAYMDTLQTQWSWLLQITKCIHVHLKENAAYSQFFKEANETYSRLQKDHENIRKKFGCDKTTPLENLNDMLKNLEKEKEKVIENKRQVQTLVSKSKNIVCLKPRNPEEKSSSPVIVQALCDFKQDQKGIMKGNEGILKDNSQRSKWHVTGPGGLEMLIPSVCLIIPPPNPLSISLANKNEQYYEAIMSIWSQLYINIKSLISWQYCLRDIQHINSLTLSMLTQMRPEEYRQTIKNLEIHYQEFLRNSLGSEMFGDDDKRKMELQYAGAQSHYDQLVIQLPNYRENGVIREVVMVETDSKLKSEVSSGKTATGVSSGKTATGVSSGKTSSSVSVSGLNVSLLSDLSALRRRLETAESGLTKHLHVPLKENSVQECSQRLAQLQAVHRDLDSIRDEYLHLREKIMRELEGSSDPEQSRYLRAELDLINQKLGSLQGFSSAYIQRLGALQALLQHLLQAEDIIKVHEARLTEKETSSLDLNEVEKYCMTLKTMKAELEQKKGVLKAMETELSKAVHWNSQIDQSFHQCDVDLSRYTELVGQMTDRWRRIVTQIDSRTWDLEKQEKQLNHYQQTSSTINRWIQDTRQRQDTLQITKFNSVDNLMDHLNQQKALYSEIKGKKEKVDAVVKDSDTCAASIKDYELQLASYSAGLETLLNIPIKKTMLQSPATVLREEATDLQSRYIELLTRSSDYYKFLGEMLKNMEELKMRNTKIELLEEELRRLKDNLKDQNQKNKSLEDSLTRFRLELTQSKEQLISMEEVKRTQARQCNTAQESLDSTQNQLKSLQDEMSRLTFLIEEEKRKRRLAEERYTNQQEEYELAMRKRQKELEELTLSKSQFERAIKEKEREIERLKLQLQDEASRRSAAELETSKTSMMIQRSDSNYKDIVQERDSLLIKLKLLQQDKDKQQRYEEELRRIKLTLESETKQKQRLQDEIDKITKDFKYWKSQYELKEGQIRQSEMDRDRVERDRASLQSEIQRLTAELRSVEERYRGRLQSSDKEISELMRKKESLEIELRRLQQRPAATWKQTQTDEISKPVVEQKLTVQGLRGEVSLTELVESDLLDQTDLDKINRGQLTSKDIEHKLKSYLGGSDCIAGIYDEAKDRVMPFYQAMKDGLLRRGTTLELLEAQAASGFIIDPVNNVCMTVEEAWKRGLVGKEFKDKLLSAEKAVTGYKDPATGKIISLFQAIEKEIIEKGHGIRLLEAQIASGGIIDPKGSHRIDVEVAYRKGYFDREMNEILSYEGDDTKGFFDPNTHENLTYLELKKRCIKDPKTGLMLLPLNDKQKPKQTTTQKNTLRKRRVVIVDPDTGKEMTVREAYHRELIDYDTFLELSEQECEWEEITIETSDGNKRLLIVDRKTGIQYDIQESLQRGIINKQTLEKYRAGTMTLTEFAALITSKSNSSELAIFSSSPEDVATCSSPTQPSSPTVRKRFASVSITLSPPSDIFDDQSPVGAIFDTETLEKITIPEAQRRGIVDNITAQRLLEAQVCSGGIINPATGQRLSLKDAVQQSLIDEDMSVKLKPAQKAYDGFEDVKTKRKLSAAEAMKEKWLPYEAGQRFLEFQYLTGGLIEPGTGRRVSIEEAIRKGWLDGKGAQKLQDTRNYIKNLTCPKTKLKISYKEAMDNCMVEENNGMKMLQATSMSTKGISSPYNVSSGPSSRSGSRAGSRTGSRSGSRRGSVDYSSSSVSYTFFSSAS</sequence>
<proteinExistence type="evidence at transcript level"/>
<gene>
    <name evidence="9" type="primary">dspa</name>
</gene>
<reference evidence="7" key="1">
    <citation type="journal article" date="2013" name="Nature">
        <title>The zebrafish reference genome sequence and its relationship to the human genome.</title>
        <authorList>
            <person name="Howe K."/>
            <person name="Clark M.D."/>
            <person name="Torroja C.F."/>
            <person name="Torrance J."/>
            <person name="Berthelot C."/>
            <person name="Muffato M."/>
            <person name="Collins J.E."/>
            <person name="Humphray S."/>
            <person name="McLaren K."/>
            <person name="Matthews L."/>
            <person name="McLaren S."/>
            <person name="Sealy I."/>
            <person name="Caccamo M."/>
            <person name="Churcher C."/>
            <person name="Scott C."/>
            <person name="Barrett J.C."/>
            <person name="Koch R."/>
            <person name="Rauch G.J."/>
            <person name="White S."/>
            <person name="Chow W."/>
            <person name="Kilian B."/>
            <person name="Quintais L.T."/>
            <person name="Guerra-Assuncao J.A."/>
            <person name="Zhou Y."/>
            <person name="Gu Y."/>
            <person name="Yen J."/>
            <person name="Vogel J.H."/>
            <person name="Eyre T."/>
            <person name="Redmond S."/>
            <person name="Banerjee R."/>
            <person name="Chi J."/>
            <person name="Fu B."/>
            <person name="Langley E."/>
            <person name="Maguire S.F."/>
            <person name="Laird G.K."/>
            <person name="Lloyd D."/>
            <person name="Kenyon E."/>
            <person name="Donaldson S."/>
            <person name="Sehra H."/>
            <person name="Almeida-King J."/>
            <person name="Loveland J."/>
            <person name="Trevanion S."/>
            <person name="Jones M."/>
            <person name="Quail M."/>
            <person name="Willey D."/>
            <person name="Hunt A."/>
            <person name="Burton J."/>
            <person name="Sims S."/>
            <person name="McLay K."/>
            <person name="Plumb B."/>
            <person name="Davis J."/>
            <person name="Clee C."/>
            <person name="Oliver K."/>
            <person name="Clark R."/>
            <person name="Riddle C."/>
            <person name="Elliot D."/>
            <person name="Threadgold G."/>
            <person name="Harden G."/>
            <person name="Ware D."/>
            <person name="Begum S."/>
            <person name="Mortimore B."/>
            <person name="Kerry G."/>
            <person name="Heath P."/>
            <person name="Phillimore B."/>
            <person name="Tracey A."/>
            <person name="Corby N."/>
            <person name="Dunn M."/>
            <person name="Johnson C."/>
            <person name="Wood J."/>
            <person name="Clark S."/>
            <person name="Pelan S."/>
            <person name="Griffiths G."/>
            <person name="Smith M."/>
            <person name="Glithero R."/>
            <person name="Howden P."/>
            <person name="Barker N."/>
            <person name="Lloyd C."/>
            <person name="Stevens C."/>
            <person name="Harley J."/>
            <person name="Holt K."/>
            <person name="Panagiotidis G."/>
            <person name="Lovell J."/>
            <person name="Beasley H."/>
            <person name="Henderson C."/>
            <person name="Gordon D."/>
            <person name="Auger K."/>
            <person name="Wright D."/>
            <person name="Collins J."/>
            <person name="Raisen C."/>
            <person name="Dyer L."/>
            <person name="Leung K."/>
            <person name="Robertson L."/>
            <person name="Ambridge K."/>
            <person name="Leongamornlert D."/>
            <person name="McGuire S."/>
            <person name="Gilderthorp R."/>
            <person name="Griffiths C."/>
            <person name="Manthravadi D."/>
            <person name="Nichol S."/>
            <person name="Barker G."/>
            <person name="Whitehead S."/>
            <person name="Kay M."/>
            <person name="Brown J."/>
            <person name="Murnane C."/>
            <person name="Gray E."/>
            <person name="Humphries M."/>
            <person name="Sycamore N."/>
            <person name="Barker D."/>
            <person name="Saunders D."/>
            <person name="Wallis J."/>
            <person name="Babbage A."/>
            <person name="Hammond S."/>
            <person name="Mashreghi-Mohammadi M."/>
            <person name="Barr L."/>
            <person name="Martin S."/>
            <person name="Wray P."/>
            <person name="Ellington A."/>
            <person name="Matthews N."/>
            <person name="Ellwood M."/>
            <person name="Woodmansey R."/>
            <person name="Clark G."/>
            <person name="Cooper J."/>
            <person name="Tromans A."/>
            <person name="Grafham D."/>
            <person name="Skuce C."/>
            <person name="Pandian R."/>
            <person name="Andrews R."/>
            <person name="Harrison E."/>
            <person name="Kimberley A."/>
            <person name="Garnett J."/>
            <person name="Fosker N."/>
            <person name="Hall R."/>
            <person name="Garner P."/>
            <person name="Kelly D."/>
            <person name="Bird C."/>
            <person name="Palmer S."/>
            <person name="Gehring I."/>
            <person name="Berger A."/>
            <person name="Dooley C.M."/>
            <person name="Ersan-Urun Z."/>
            <person name="Eser C."/>
            <person name="Geiger H."/>
            <person name="Geisler M."/>
            <person name="Karotki L."/>
            <person name="Kirn A."/>
            <person name="Konantz J."/>
            <person name="Konantz M."/>
            <person name="Oberlander M."/>
            <person name="Rudolph-Geiger S."/>
            <person name="Teucke M."/>
            <person name="Lanz C."/>
            <person name="Raddatz G."/>
            <person name="Osoegawa K."/>
            <person name="Zhu B."/>
            <person name="Rapp A."/>
            <person name="Widaa S."/>
            <person name="Langford C."/>
            <person name="Yang F."/>
            <person name="Schuster S.C."/>
            <person name="Carter N.P."/>
            <person name="Harrow J."/>
            <person name="Ning Z."/>
            <person name="Herrero J."/>
            <person name="Searle S.M."/>
            <person name="Enright A."/>
            <person name="Geisler R."/>
            <person name="Plasterk R.H."/>
            <person name="Lee C."/>
            <person name="Westerfield M."/>
            <person name="de Jong P.J."/>
            <person name="Zon L.I."/>
            <person name="Postlethwait J.H."/>
            <person name="Nusslein-Volhard C."/>
            <person name="Hubbard T.J."/>
            <person name="Roest Crollius H."/>
            <person name="Rogers J."/>
            <person name="Stemple D.L."/>
        </authorList>
    </citation>
    <scope>NUCLEOTIDE SEQUENCE [LARGE SCALE GENOMIC DNA]</scope>
    <source>
        <strain evidence="7">Tuebingen</strain>
    </source>
</reference>
<reference evidence="6" key="2">
    <citation type="submission" date="2005-02" db="EMBL/GenBank/DDBJ databases">
        <authorList>
            <consortium name="NIH - Zebrafish Gene Collection (ZGC) project"/>
        </authorList>
    </citation>
    <scope>NUCLEOTIDE SEQUENCE [LARGE SCALE MRNA] OF 1487-2059</scope>
    <source>
        <strain evidence="6">Singapore</strain>
        <tissue evidence="6">Embryo</tissue>
    </source>
</reference>
<reference evidence="5" key="3">
    <citation type="journal article" date="2018" name="Cardiovasc. Res.">
        <title>Loss of cardiac Wnt/beta-catenin signalling in desmoplakin-deficient AC8 zebrafish models is rescuable by genetic and pharmacological intervention.</title>
        <authorList>
            <person name="Giuliodori A."/>
            <person name="Beffagna G."/>
            <person name="Marchetto G."/>
            <person name="Fornetto C."/>
            <person name="Vanzi F."/>
            <person name="Toppo S."/>
            <person name="Facchinello N."/>
            <person name="Santimaria M."/>
            <person name="Vettori A."/>
            <person name="Rizzo S."/>
            <person name="Della Barbera M."/>
            <person name="Pilichou K."/>
            <person name="Argenton F."/>
            <person name="Thiene G."/>
            <person name="Tiso N."/>
            <person name="Basso C."/>
        </authorList>
    </citation>
    <scope>FUNCTION</scope>
    <scope>DEVELOPMENTAL STAGE</scope>
    <scope>DISRUPTION PHENOTYPE</scope>
</reference>
<organism evidence="7">
    <name type="scientific">Danio rerio</name>
    <name type="common">Zebrafish</name>
    <name type="synonym">Brachydanio rerio</name>
    <dbReference type="NCBI Taxonomy" id="7955"/>
    <lineage>
        <taxon>Eukaryota</taxon>
        <taxon>Metazoa</taxon>
        <taxon>Chordata</taxon>
        <taxon>Craniata</taxon>
        <taxon>Vertebrata</taxon>
        <taxon>Euteleostomi</taxon>
        <taxon>Actinopterygii</taxon>
        <taxon>Neopterygii</taxon>
        <taxon>Teleostei</taxon>
        <taxon>Ostariophysi</taxon>
        <taxon>Cypriniformes</taxon>
        <taxon>Danionidae</taxon>
        <taxon>Danioninae</taxon>
        <taxon>Danio</taxon>
    </lineage>
</organism>